<reference key="1">
    <citation type="submission" date="2009-01" db="EMBL/GenBank/DDBJ databases">
        <title>Complete sequence of chromosome of Caldicellulosiruptor becscii DSM 6725.</title>
        <authorList>
            <person name="Lucas S."/>
            <person name="Copeland A."/>
            <person name="Lapidus A."/>
            <person name="Glavina del Rio T."/>
            <person name="Tice H."/>
            <person name="Bruce D."/>
            <person name="Goodwin L."/>
            <person name="Pitluck S."/>
            <person name="Sims D."/>
            <person name="Meincke L."/>
            <person name="Brettin T."/>
            <person name="Detter J.C."/>
            <person name="Han C."/>
            <person name="Larimer F."/>
            <person name="Land M."/>
            <person name="Hauser L."/>
            <person name="Kyrpides N."/>
            <person name="Ovchinnikova G."/>
            <person name="Kataeva I."/>
            <person name="Adams M.W.W."/>
        </authorList>
    </citation>
    <scope>NUCLEOTIDE SEQUENCE [LARGE SCALE GENOMIC DNA]</scope>
    <source>
        <strain>ATCC BAA-1888 / DSM 6725 / KCTC 15123 / Z-1320</strain>
    </source>
</reference>
<gene>
    <name evidence="1" type="primary">trmFO</name>
    <name type="ordered locus">Athe_2180</name>
</gene>
<organism>
    <name type="scientific">Caldicellulosiruptor bescii (strain ATCC BAA-1888 / DSM 6725 / KCTC 15123 / Z-1320)</name>
    <name type="common">Anaerocellum thermophilum</name>
    <dbReference type="NCBI Taxonomy" id="521460"/>
    <lineage>
        <taxon>Bacteria</taxon>
        <taxon>Bacillati</taxon>
        <taxon>Bacillota</taxon>
        <taxon>Bacillota incertae sedis</taxon>
        <taxon>Caldicellulosiruptorales</taxon>
        <taxon>Caldicellulosiruptoraceae</taxon>
        <taxon>Caldicellulosiruptor</taxon>
    </lineage>
</organism>
<protein>
    <recommendedName>
        <fullName evidence="1">Methylenetetrahydrofolate--tRNA-(uracil-5-)-methyltransferase TrmFO</fullName>
        <ecNumber evidence="1">2.1.1.74</ecNumber>
    </recommendedName>
    <alternativeName>
        <fullName evidence="1">Folate-dependent tRNA (uracil-5-)-methyltransferase</fullName>
    </alternativeName>
    <alternativeName>
        <fullName evidence="1">Folate-dependent tRNA(M-5-U54)-methyltransferase</fullName>
    </alternativeName>
</protein>
<accession>B9MM32</accession>
<keyword id="KW-0963">Cytoplasm</keyword>
<keyword id="KW-0274">FAD</keyword>
<keyword id="KW-0285">Flavoprotein</keyword>
<keyword id="KW-0489">Methyltransferase</keyword>
<keyword id="KW-0520">NAD</keyword>
<keyword id="KW-0521">NADP</keyword>
<keyword id="KW-0808">Transferase</keyword>
<keyword id="KW-0819">tRNA processing</keyword>
<feature type="chain" id="PRO_1000149463" description="Methylenetetrahydrofolate--tRNA-(uracil-5-)-methyltransferase TrmFO">
    <location>
        <begin position="1"/>
        <end position="436"/>
    </location>
</feature>
<feature type="binding site" evidence="1">
    <location>
        <begin position="7"/>
        <end position="12"/>
    </location>
    <ligand>
        <name>FAD</name>
        <dbReference type="ChEBI" id="CHEBI:57692"/>
    </ligand>
</feature>
<comment type="function">
    <text evidence="1">Catalyzes the folate-dependent formation of 5-methyl-uridine at position 54 (M-5-U54) in all tRNAs.</text>
</comment>
<comment type="catalytic activity">
    <reaction evidence="1">
        <text>uridine(54) in tRNA + (6R)-5,10-methylene-5,6,7,8-tetrahydrofolate + NADH + H(+) = 5-methyluridine(54) in tRNA + (6S)-5,6,7,8-tetrahydrofolate + NAD(+)</text>
        <dbReference type="Rhea" id="RHEA:16873"/>
        <dbReference type="Rhea" id="RHEA-COMP:10167"/>
        <dbReference type="Rhea" id="RHEA-COMP:10193"/>
        <dbReference type="ChEBI" id="CHEBI:15378"/>
        <dbReference type="ChEBI" id="CHEBI:15636"/>
        <dbReference type="ChEBI" id="CHEBI:57453"/>
        <dbReference type="ChEBI" id="CHEBI:57540"/>
        <dbReference type="ChEBI" id="CHEBI:57945"/>
        <dbReference type="ChEBI" id="CHEBI:65315"/>
        <dbReference type="ChEBI" id="CHEBI:74447"/>
        <dbReference type="EC" id="2.1.1.74"/>
    </reaction>
</comment>
<comment type="catalytic activity">
    <reaction evidence="1">
        <text>uridine(54) in tRNA + (6R)-5,10-methylene-5,6,7,8-tetrahydrofolate + NADPH + H(+) = 5-methyluridine(54) in tRNA + (6S)-5,6,7,8-tetrahydrofolate + NADP(+)</text>
        <dbReference type="Rhea" id="RHEA:62372"/>
        <dbReference type="Rhea" id="RHEA-COMP:10167"/>
        <dbReference type="Rhea" id="RHEA-COMP:10193"/>
        <dbReference type="ChEBI" id="CHEBI:15378"/>
        <dbReference type="ChEBI" id="CHEBI:15636"/>
        <dbReference type="ChEBI" id="CHEBI:57453"/>
        <dbReference type="ChEBI" id="CHEBI:57783"/>
        <dbReference type="ChEBI" id="CHEBI:58349"/>
        <dbReference type="ChEBI" id="CHEBI:65315"/>
        <dbReference type="ChEBI" id="CHEBI:74447"/>
        <dbReference type="EC" id="2.1.1.74"/>
    </reaction>
</comment>
<comment type="cofactor">
    <cofactor evidence="1">
        <name>FAD</name>
        <dbReference type="ChEBI" id="CHEBI:57692"/>
    </cofactor>
</comment>
<comment type="subcellular location">
    <subcellularLocation>
        <location evidence="1">Cytoplasm</location>
    </subcellularLocation>
</comment>
<comment type="similarity">
    <text evidence="1">Belongs to the MnmG family. TrmFO subfamily.</text>
</comment>
<proteinExistence type="inferred from homology"/>
<evidence type="ECO:0000255" key="1">
    <source>
        <dbReference type="HAMAP-Rule" id="MF_01037"/>
    </source>
</evidence>
<sequence length="436" mass="49016">MEIVVIGAGLAGVEAANVISKFGIKVKLFEMKPKKFSPAHKIDNFAELVCSNSLKSKLLTNASGLLKEEMKVFGSLVMEAAEATSVEAGQALAVDRYKFSEYITQRIKHNGLISIIHEEVTEVPRDKVVVVSTGPLTTESLLSDISKLCNSKNLYFFDAAAPIVLKDSIDFSKAFFASRYNKGSNDYINCPMTKEEYERFYWELVNAEVIEVKDFEKDLLFEGCMPIEEMARRGIDTMRYGPLKPVGIIDPRTGKMPYAVVQLRKDTQDGKLYNMVGFQTRLKWSEQKRVFRLIPGLENAEFVRYGVMHKNSYINSPEVLTKYLFLKKYPNIFFAGQITGVEGYLESASTGIIAGINAARQILGKEPISLPPNTCIGALIEYITTPKKDFQPMNANYGIISIDDEISKIKDKEKRKLLIAQKSLNICRELANKIFE</sequence>
<name>TRMFO_CALBD</name>
<dbReference type="EC" id="2.1.1.74" evidence="1"/>
<dbReference type="EMBL" id="CP001393">
    <property type="protein sequence ID" value="ACM61255.1"/>
    <property type="molecule type" value="Genomic_DNA"/>
</dbReference>
<dbReference type="RefSeq" id="WP_015908517.1">
    <property type="nucleotide sequence ID" value="NC_012034.1"/>
</dbReference>
<dbReference type="SMR" id="B9MM32"/>
<dbReference type="STRING" id="521460.Athe_2180"/>
<dbReference type="GeneID" id="31773529"/>
<dbReference type="KEGG" id="ate:Athe_2180"/>
<dbReference type="eggNOG" id="COG1206">
    <property type="taxonomic scope" value="Bacteria"/>
</dbReference>
<dbReference type="HOGENOM" id="CLU_033057_1_0_9"/>
<dbReference type="Proteomes" id="UP000007723">
    <property type="component" value="Chromosome"/>
</dbReference>
<dbReference type="GO" id="GO:0005829">
    <property type="term" value="C:cytosol"/>
    <property type="evidence" value="ECO:0007669"/>
    <property type="project" value="TreeGrafter"/>
</dbReference>
<dbReference type="GO" id="GO:0050660">
    <property type="term" value="F:flavin adenine dinucleotide binding"/>
    <property type="evidence" value="ECO:0007669"/>
    <property type="project" value="UniProtKB-UniRule"/>
</dbReference>
<dbReference type="GO" id="GO:0047151">
    <property type="term" value="F:tRNA (uracil(54)-C5)-methyltransferase activity, 5,10-methylenetetrahydrofolate-dependent"/>
    <property type="evidence" value="ECO:0007669"/>
    <property type="project" value="UniProtKB-UniRule"/>
</dbReference>
<dbReference type="GO" id="GO:0030488">
    <property type="term" value="P:tRNA methylation"/>
    <property type="evidence" value="ECO:0007669"/>
    <property type="project" value="TreeGrafter"/>
</dbReference>
<dbReference type="GO" id="GO:0002098">
    <property type="term" value="P:tRNA wobble uridine modification"/>
    <property type="evidence" value="ECO:0007669"/>
    <property type="project" value="TreeGrafter"/>
</dbReference>
<dbReference type="Gene3D" id="3.50.50.60">
    <property type="entry name" value="FAD/NAD(P)-binding domain"/>
    <property type="match status" value="2"/>
</dbReference>
<dbReference type="HAMAP" id="MF_01037">
    <property type="entry name" value="TrmFO"/>
    <property type="match status" value="1"/>
</dbReference>
<dbReference type="InterPro" id="IPR036188">
    <property type="entry name" value="FAD/NAD-bd_sf"/>
</dbReference>
<dbReference type="InterPro" id="IPR002218">
    <property type="entry name" value="MnmG-rel"/>
</dbReference>
<dbReference type="InterPro" id="IPR020595">
    <property type="entry name" value="MnmG-rel_CS"/>
</dbReference>
<dbReference type="InterPro" id="IPR040131">
    <property type="entry name" value="MnmG_N"/>
</dbReference>
<dbReference type="InterPro" id="IPR004417">
    <property type="entry name" value="TrmFO"/>
</dbReference>
<dbReference type="NCBIfam" id="TIGR00137">
    <property type="entry name" value="gid_trmFO"/>
    <property type="match status" value="1"/>
</dbReference>
<dbReference type="NCBIfam" id="NF003739">
    <property type="entry name" value="PRK05335.1"/>
    <property type="match status" value="1"/>
</dbReference>
<dbReference type="PANTHER" id="PTHR11806">
    <property type="entry name" value="GLUCOSE INHIBITED DIVISION PROTEIN A"/>
    <property type="match status" value="1"/>
</dbReference>
<dbReference type="PANTHER" id="PTHR11806:SF2">
    <property type="entry name" value="METHYLENETETRAHYDROFOLATE--TRNA-(URACIL-5-)-METHYLTRANSFERASE TRMFO"/>
    <property type="match status" value="1"/>
</dbReference>
<dbReference type="Pfam" id="PF01134">
    <property type="entry name" value="GIDA"/>
    <property type="match status" value="1"/>
</dbReference>
<dbReference type="SUPFAM" id="SSF51905">
    <property type="entry name" value="FAD/NAD(P)-binding domain"/>
    <property type="match status" value="1"/>
</dbReference>
<dbReference type="PROSITE" id="PS01281">
    <property type="entry name" value="GIDA_2"/>
    <property type="match status" value="1"/>
</dbReference>